<evidence type="ECO:0000255" key="1">
    <source>
        <dbReference type="HAMAP-Rule" id="MF_01393"/>
    </source>
</evidence>
<gene>
    <name evidence="1" type="primary">atpB</name>
    <name type="ordered locus">BAV3220</name>
</gene>
<name>ATP6_BORA1</name>
<accession>Q2KU30</accession>
<reference key="1">
    <citation type="journal article" date="2006" name="J. Bacteriol.">
        <title>Comparison of the genome sequence of the poultry pathogen Bordetella avium with those of B. bronchiseptica, B. pertussis, and B. parapertussis reveals extensive diversity in surface structures associated with host interaction.</title>
        <authorList>
            <person name="Sebaihia M."/>
            <person name="Preston A."/>
            <person name="Maskell D.J."/>
            <person name="Kuzmiak H."/>
            <person name="Connell T.D."/>
            <person name="King N.D."/>
            <person name="Orndorff P.E."/>
            <person name="Miyamoto D.M."/>
            <person name="Thomson N.R."/>
            <person name="Harris D."/>
            <person name="Goble A."/>
            <person name="Lord A."/>
            <person name="Murphy L."/>
            <person name="Quail M.A."/>
            <person name="Rutter S."/>
            <person name="Squares R."/>
            <person name="Squares S."/>
            <person name="Woodward J."/>
            <person name="Parkhill J."/>
            <person name="Temple L.M."/>
        </authorList>
    </citation>
    <scope>NUCLEOTIDE SEQUENCE [LARGE SCALE GENOMIC DNA]</scope>
    <source>
        <strain>197N</strain>
    </source>
</reference>
<organism>
    <name type="scientific">Bordetella avium (strain 197N)</name>
    <dbReference type="NCBI Taxonomy" id="360910"/>
    <lineage>
        <taxon>Bacteria</taxon>
        <taxon>Pseudomonadati</taxon>
        <taxon>Pseudomonadota</taxon>
        <taxon>Betaproteobacteria</taxon>
        <taxon>Burkholderiales</taxon>
        <taxon>Alcaligenaceae</taxon>
        <taxon>Bordetella</taxon>
    </lineage>
</organism>
<proteinExistence type="inferred from homology"/>
<comment type="function">
    <text evidence="1">Key component of the proton channel; it plays a direct role in the translocation of protons across the membrane.</text>
</comment>
<comment type="subunit">
    <text evidence="1">F-type ATPases have 2 components, CF(1) - the catalytic core - and CF(0) - the membrane proton channel. CF(1) has five subunits: alpha(3), beta(3), gamma(1), delta(1), epsilon(1). CF(0) has three main subunits: a(1), b(2) and c(9-12). The alpha and beta chains form an alternating ring which encloses part of the gamma chain. CF(1) is attached to CF(0) by a central stalk formed by the gamma and epsilon chains, while a peripheral stalk is formed by the delta and b chains.</text>
</comment>
<comment type="subcellular location">
    <subcellularLocation>
        <location evidence="1">Cell inner membrane</location>
        <topology evidence="1">Multi-pass membrane protein</topology>
    </subcellularLocation>
</comment>
<comment type="similarity">
    <text evidence="1">Belongs to the ATPase A chain family.</text>
</comment>
<keyword id="KW-0066">ATP synthesis</keyword>
<keyword id="KW-0997">Cell inner membrane</keyword>
<keyword id="KW-1003">Cell membrane</keyword>
<keyword id="KW-0138">CF(0)</keyword>
<keyword id="KW-0375">Hydrogen ion transport</keyword>
<keyword id="KW-0406">Ion transport</keyword>
<keyword id="KW-0472">Membrane</keyword>
<keyword id="KW-1185">Reference proteome</keyword>
<keyword id="KW-0812">Transmembrane</keyword>
<keyword id="KW-1133">Transmembrane helix</keyword>
<keyword id="KW-0813">Transport</keyword>
<sequence>MAAASGASPQSEYIQHHLVHLNNLGEKQSVIAQFNVINYDSLFWSGLMGLIVIFCLWLAARRATAGVPGRFQGFVEMIVDMVNDQAKGIVQNAKSREFVAPLALTVFLWIILMNALDLLPVDLFPTIWRVTGLGAEHGDPLYYHRILPTADLNVPMGMSLGVLLLMFYYGIKIKHPAGFVKELFTAPFHAHGLAALVLAPFNLLLNLIEYAAKSVSLGMRLFGNMFAGELIFMLIALLGGAWTGFNASSIGLGIGHVLAGSVWAIFHILIVLLQAFIFMMLTLVYIGQAHEGH</sequence>
<protein>
    <recommendedName>
        <fullName evidence="1">ATP synthase subunit a</fullName>
    </recommendedName>
    <alternativeName>
        <fullName evidence="1">ATP synthase F0 sector subunit a</fullName>
    </alternativeName>
    <alternativeName>
        <fullName evidence="1">F-ATPase subunit 6</fullName>
    </alternativeName>
</protein>
<feature type="chain" id="PRO_1000145261" description="ATP synthase subunit a">
    <location>
        <begin position="1"/>
        <end position="293"/>
    </location>
</feature>
<feature type="transmembrane region" description="Helical" evidence="1">
    <location>
        <begin position="40"/>
        <end position="60"/>
    </location>
</feature>
<feature type="transmembrane region" description="Helical" evidence="1">
    <location>
        <begin position="98"/>
        <end position="118"/>
    </location>
</feature>
<feature type="transmembrane region" description="Helical" evidence="1">
    <location>
        <begin position="151"/>
        <end position="171"/>
    </location>
</feature>
<feature type="transmembrane region" description="Helical" evidence="1">
    <location>
        <begin position="188"/>
        <end position="208"/>
    </location>
</feature>
<feature type="transmembrane region" description="Helical" evidence="1">
    <location>
        <begin position="225"/>
        <end position="245"/>
    </location>
</feature>
<feature type="transmembrane region" description="Helical" evidence="1">
    <location>
        <begin position="264"/>
        <end position="284"/>
    </location>
</feature>
<dbReference type="EMBL" id="AM167904">
    <property type="protein sequence ID" value="CAJ50830.1"/>
    <property type="molecule type" value="Genomic_DNA"/>
</dbReference>
<dbReference type="RefSeq" id="WP_012418857.1">
    <property type="nucleotide sequence ID" value="NC_010645.1"/>
</dbReference>
<dbReference type="SMR" id="Q2KU30"/>
<dbReference type="STRING" id="360910.BAV3220"/>
<dbReference type="GeneID" id="92933522"/>
<dbReference type="KEGG" id="bav:BAV3220"/>
<dbReference type="eggNOG" id="COG0356">
    <property type="taxonomic scope" value="Bacteria"/>
</dbReference>
<dbReference type="HOGENOM" id="CLU_041018_1_0_4"/>
<dbReference type="OrthoDB" id="9789241at2"/>
<dbReference type="Proteomes" id="UP000001977">
    <property type="component" value="Chromosome"/>
</dbReference>
<dbReference type="GO" id="GO:0005886">
    <property type="term" value="C:plasma membrane"/>
    <property type="evidence" value="ECO:0007669"/>
    <property type="project" value="UniProtKB-SubCell"/>
</dbReference>
<dbReference type="GO" id="GO:0045259">
    <property type="term" value="C:proton-transporting ATP synthase complex"/>
    <property type="evidence" value="ECO:0007669"/>
    <property type="project" value="UniProtKB-KW"/>
</dbReference>
<dbReference type="GO" id="GO:0046933">
    <property type="term" value="F:proton-transporting ATP synthase activity, rotational mechanism"/>
    <property type="evidence" value="ECO:0007669"/>
    <property type="project" value="UniProtKB-UniRule"/>
</dbReference>
<dbReference type="GO" id="GO:0042777">
    <property type="term" value="P:proton motive force-driven plasma membrane ATP synthesis"/>
    <property type="evidence" value="ECO:0007669"/>
    <property type="project" value="TreeGrafter"/>
</dbReference>
<dbReference type="CDD" id="cd00310">
    <property type="entry name" value="ATP-synt_Fo_a_6"/>
    <property type="match status" value="1"/>
</dbReference>
<dbReference type="FunFam" id="1.20.120.220:FF:000002">
    <property type="entry name" value="ATP synthase subunit a"/>
    <property type="match status" value="1"/>
</dbReference>
<dbReference type="Gene3D" id="1.20.120.220">
    <property type="entry name" value="ATP synthase, F0 complex, subunit A"/>
    <property type="match status" value="1"/>
</dbReference>
<dbReference type="HAMAP" id="MF_01393">
    <property type="entry name" value="ATP_synth_a_bact"/>
    <property type="match status" value="1"/>
</dbReference>
<dbReference type="InterPro" id="IPR045082">
    <property type="entry name" value="ATP_syn_F0_a_bact/chloroplast"/>
</dbReference>
<dbReference type="InterPro" id="IPR000568">
    <property type="entry name" value="ATP_synth_F0_asu"/>
</dbReference>
<dbReference type="InterPro" id="IPR023011">
    <property type="entry name" value="ATP_synth_F0_asu_AS"/>
</dbReference>
<dbReference type="InterPro" id="IPR035908">
    <property type="entry name" value="F0_ATP_A_sf"/>
</dbReference>
<dbReference type="NCBIfam" id="TIGR01131">
    <property type="entry name" value="ATP_synt_6_or_A"/>
    <property type="match status" value="1"/>
</dbReference>
<dbReference type="NCBIfam" id="NF004477">
    <property type="entry name" value="PRK05815.1-1"/>
    <property type="match status" value="1"/>
</dbReference>
<dbReference type="PANTHER" id="PTHR42823">
    <property type="entry name" value="ATP SYNTHASE SUBUNIT A, CHLOROPLASTIC"/>
    <property type="match status" value="1"/>
</dbReference>
<dbReference type="PANTHER" id="PTHR42823:SF3">
    <property type="entry name" value="ATP SYNTHASE SUBUNIT A, CHLOROPLASTIC"/>
    <property type="match status" value="1"/>
</dbReference>
<dbReference type="Pfam" id="PF00119">
    <property type="entry name" value="ATP-synt_A"/>
    <property type="match status" value="1"/>
</dbReference>
<dbReference type="SUPFAM" id="SSF81336">
    <property type="entry name" value="F1F0 ATP synthase subunit A"/>
    <property type="match status" value="1"/>
</dbReference>
<dbReference type="PROSITE" id="PS00449">
    <property type="entry name" value="ATPASE_A"/>
    <property type="match status" value="1"/>
</dbReference>